<name>SHLB1_CHICK</name>
<dbReference type="EMBL" id="AJ720723">
    <property type="protein sequence ID" value="CAG32382.1"/>
    <property type="molecule type" value="mRNA"/>
</dbReference>
<dbReference type="RefSeq" id="NP_001006534.1">
    <property type="nucleotide sequence ID" value="NM_001006534.2"/>
</dbReference>
<dbReference type="SMR" id="Q5ZIR1"/>
<dbReference type="FunCoup" id="Q5ZIR1">
    <property type="interactions" value="2048"/>
</dbReference>
<dbReference type="STRING" id="9031.ENSGALP00000047220"/>
<dbReference type="PaxDb" id="9031-ENSGALP00000007174"/>
<dbReference type="Ensembl" id="ENSGALT00010056260.1">
    <property type="protein sequence ID" value="ENSGALP00010034056.1"/>
    <property type="gene ID" value="ENSGALG00010023087.1"/>
</dbReference>
<dbReference type="GeneID" id="424522"/>
<dbReference type="KEGG" id="gga:424522"/>
<dbReference type="CTD" id="51100"/>
<dbReference type="VEuPathDB" id="HostDB:geneid_424522"/>
<dbReference type="eggNOG" id="KOG3725">
    <property type="taxonomic scope" value="Eukaryota"/>
</dbReference>
<dbReference type="GeneTree" id="ENSGT00940000155667"/>
<dbReference type="HOGENOM" id="CLU_043817_1_1_1"/>
<dbReference type="InParanoid" id="Q5ZIR1"/>
<dbReference type="OrthoDB" id="14167at2759"/>
<dbReference type="PhylomeDB" id="Q5ZIR1"/>
<dbReference type="PRO" id="PR:Q5ZIR1"/>
<dbReference type="Proteomes" id="UP000000539">
    <property type="component" value="Chromosome 8"/>
</dbReference>
<dbReference type="Bgee" id="ENSGALG00000006284">
    <property type="expression patterns" value="Expressed in spermatid and 14 other cell types or tissues"/>
</dbReference>
<dbReference type="GO" id="GO:0000139">
    <property type="term" value="C:Golgi membrane"/>
    <property type="evidence" value="ECO:0007669"/>
    <property type="project" value="UniProtKB-SubCell"/>
</dbReference>
<dbReference type="GO" id="GO:0016020">
    <property type="term" value="C:membrane"/>
    <property type="evidence" value="ECO:0000318"/>
    <property type="project" value="GO_Central"/>
</dbReference>
<dbReference type="GO" id="GO:0005741">
    <property type="term" value="C:mitochondrial outer membrane"/>
    <property type="evidence" value="ECO:0007669"/>
    <property type="project" value="UniProtKB-SubCell"/>
</dbReference>
<dbReference type="GO" id="GO:0008289">
    <property type="term" value="F:lipid binding"/>
    <property type="evidence" value="ECO:0007669"/>
    <property type="project" value="UniProtKB-KW"/>
</dbReference>
<dbReference type="GO" id="GO:0006915">
    <property type="term" value="P:apoptotic process"/>
    <property type="evidence" value="ECO:0007669"/>
    <property type="project" value="UniProtKB-KW"/>
</dbReference>
<dbReference type="GO" id="GO:0061024">
    <property type="term" value="P:membrane organization"/>
    <property type="evidence" value="ECO:0000318"/>
    <property type="project" value="GO_Central"/>
</dbReference>
<dbReference type="CDD" id="cd07616">
    <property type="entry name" value="BAR_Endophilin_B1"/>
    <property type="match status" value="1"/>
</dbReference>
<dbReference type="CDD" id="cd11945">
    <property type="entry name" value="SH3_Endophilin_B1"/>
    <property type="match status" value="1"/>
</dbReference>
<dbReference type="FunFam" id="1.20.1270.60:FF:000017">
    <property type="entry name" value="endophilin-B2 isoform X1"/>
    <property type="match status" value="1"/>
</dbReference>
<dbReference type="FunFam" id="2.30.30.40:FF:000028">
    <property type="entry name" value="endophilin-B2 isoform X1"/>
    <property type="match status" value="1"/>
</dbReference>
<dbReference type="Gene3D" id="1.20.1270.60">
    <property type="entry name" value="Arfaptin homology (AH) domain/BAR domain"/>
    <property type="match status" value="1"/>
</dbReference>
<dbReference type="Gene3D" id="2.30.30.40">
    <property type="entry name" value="SH3 Domains"/>
    <property type="match status" value="1"/>
</dbReference>
<dbReference type="InterPro" id="IPR027267">
    <property type="entry name" value="AH/BAR_dom_sf"/>
</dbReference>
<dbReference type="InterPro" id="IPR004148">
    <property type="entry name" value="BAR_dom"/>
</dbReference>
<dbReference type="InterPro" id="IPR050384">
    <property type="entry name" value="Endophilin_SH3RF"/>
</dbReference>
<dbReference type="InterPro" id="IPR036028">
    <property type="entry name" value="SH3-like_dom_sf"/>
</dbReference>
<dbReference type="InterPro" id="IPR001452">
    <property type="entry name" value="SH3_domain"/>
</dbReference>
<dbReference type="InterPro" id="IPR035695">
    <property type="entry name" value="SH3GLB1_BAR"/>
</dbReference>
<dbReference type="InterPro" id="IPR028503">
    <property type="entry name" value="SH3GLB_SH3"/>
</dbReference>
<dbReference type="PANTHER" id="PTHR14167:SF52">
    <property type="entry name" value="ENDOPHILIN-B1"/>
    <property type="match status" value="1"/>
</dbReference>
<dbReference type="PANTHER" id="PTHR14167">
    <property type="entry name" value="SH3 DOMAIN-CONTAINING"/>
    <property type="match status" value="1"/>
</dbReference>
<dbReference type="Pfam" id="PF03114">
    <property type="entry name" value="BAR"/>
    <property type="match status" value="1"/>
</dbReference>
<dbReference type="Pfam" id="PF14604">
    <property type="entry name" value="SH3_9"/>
    <property type="match status" value="1"/>
</dbReference>
<dbReference type="SMART" id="SM00721">
    <property type="entry name" value="BAR"/>
    <property type="match status" value="1"/>
</dbReference>
<dbReference type="SMART" id="SM00326">
    <property type="entry name" value="SH3"/>
    <property type="match status" value="1"/>
</dbReference>
<dbReference type="SUPFAM" id="SSF103657">
    <property type="entry name" value="BAR/IMD domain-like"/>
    <property type="match status" value="1"/>
</dbReference>
<dbReference type="SUPFAM" id="SSF50044">
    <property type="entry name" value="SH3-domain"/>
    <property type="match status" value="1"/>
</dbReference>
<dbReference type="PROSITE" id="PS51021">
    <property type="entry name" value="BAR"/>
    <property type="match status" value="1"/>
</dbReference>
<dbReference type="PROSITE" id="PS50002">
    <property type="entry name" value="SH3"/>
    <property type="match status" value="1"/>
</dbReference>
<keyword id="KW-0053">Apoptosis</keyword>
<keyword id="KW-0175">Coiled coil</keyword>
<keyword id="KW-0963">Cytoplasm</keyword>
<keyword id="KW-0333">Golgi apparatus</keyword>
<keyword id="KW-0446">Lipid-binding</keyword>
<keyword id="KW-0472">Membrane</keyword>
<keyword id="KW-0496">Mitochondrion</keyword>
<keyword id="KW-1000">Mitochondrion outer membrane</keyword>
<keyword id="KW-1185">Reference proteome</keyword>
<keyword id="KW-0728">SH3 domain</keyword>
<evidence type="ECO:0000250" key="1"/>
<evidence type="ECO:0000250" key="2">
    <source>
        <dbReference type="UniProtKB" id="Q9JK48"/>
    </source>
</evidence>
<evidence type="ECO:0000250" key="3">
    <source>
        <dbReference type="UniProtKB" id="Q9Y371"/>
    </source>
</evidence>
<evidence type="ECO:0000255" key="4"/>
<evidence type="ECO:0000255" key="5">
    <source>
        <dbReference type="PROSITE-ProRule" id="PRU00192"/>
    </source>
</evidence>
<evidence type="ECO:0000255" key="6">
    <source>
        <dbReference type="PROSITE-ProRule" id="PRU00361"/>
    </source>
</evidence>
<evidence type="ECO:0000312" key="7">
    <source>
        <dbReference type="EMBL" id="CAG32382.1"/>
    </source>
</evidence>
<comment type="function">
    <text evidence="3">May be required for normal outer mitochondrial membrane dynamics. Required for coatomer-mediated retrograde transport in certain cells. May recruit other proteins to membranes with high curvature. May promote membrane fusion (By similarity).</text>
</comment>
<comment type="subunit">
    <text evidence="1">Homodimer, and heterodimer with SH3GLB2. Binds BAX. Binds DNM1, HTT, AMPH, BIN1 and ARFGAP1 (By similarity).</text>
</comment>
<comment type="subcellular location">
    <subcellularLocation>
        <location evidence="2 3">Cytoplasm</location>
    </subcellularLocation>
    <subcellularLocation>
        <location evidence="2 3">Golgi apparatus membrane</location>
        <topology evidence="2 3">Peripheral membrane protein</topology>
    </subcellularLocation>
    <subcellularLocation>
        <location evidence="2 3">Mitochondrion outer membrane</location>
        <topology evidence="2 3">Peripheral membrane protein</topology>
    </subcellularLocation>
    <text evidence="2 3">Association with the Golgi apparatus depends on the cell type.</text>
</comment>
<comment type="domain">
    <text evidence="1">An N-terminal amphipathic helix, the BAR domain and a second amphipathic helix inserted into helix 1 of the BAR domain (N-BAR domain) induce membrane curvature and bind curved membranes.</text>
</comment>
<comment type="similarity">
    <text evidence="4">Belongs to the endophilin family.</text>
</comment>
<accession>Q5ZIR1</accession>
<protein>
    <recommendedName>
        <fullName>Endophilin-B1</fullName>
    </recommendedName>
    <alternativeName>
        <fullName>SH3 domain-containing GRB2-like protein B1</fullName>
    </alternativeName>
</protein>
<gene>
    <name evidence="3" type="primary">SH3GLB1</name>
    <name type="ORF">RCJMB04_24b23</name>
</gene>
<proteinExistence type="evidence at transcript level"/>
<sequence length="366" mass="40795">MNIMDFNMKKLAADAGTFLSRAVQFTEEKLGQAEKTELDAHLENLLSKAECTKQWTEKIMKQTEVLLQPNPNARIEEFFYEKLDRKAPSRMNNPELLGQYMIDAGNEFGPGTAYGNALIKCGETQKQIGTADRELIQTSAINFLTPLRNFIEGDYKTITKERKLLQNKRLDLDAAKTRLKKAKVAEARAASEQEVRITQSEFDRQAEITRLLLEGISSTHAHHLRCLNDFVEAQMTYYAQCYKYMLDLQKQLGSFPSTFLSNNNQSSSAPVQSVSTPSVLASASASLPSVSNSVVTSGISELKSSSGSRKARVLYDYDAANSSELSLLADEVITVYSIPGMDSDWLMGERGNQKGKVPITYLELLN</sequence>
<feature type="chain" id="PRO_0000307712" description="Endophilin-B1">
    <location>
        <begin position="1"/>
        <end position="366"/>
    </location>
</feature>
<feature type="domain" description="BAR" evidence="6">
    <location>
        <begin position="27"/>
        <end position="261"/>
    </location>
</feature>
<feature type="domain" description="SH3" evidence="5">
    <location>
        <begin position="306"/>
        <end position="366"/>
    </location>
</feature>
<feature type="region of interest" description="Required for membrane binding" evidence="3">
    <location>
        <begin position="1"/>
        <end position="37"/>
    </location>
</feature>
<feature type="region of interest" description="Membrane-binding amphipathic helix" evidence="3">
    <location>
        <begin position="1"/>
        <end position="30"/>
    </location>
</feature>
<feature type="coiled-coil region" evidence="4">
    <location>
        <begin position="34"/>
        <end position="54"/>
    </location>
</feature>
<feature type="coiled-coil region" evidence="4">
    <location>
        <begin position="160"/>
        <end position="185"/>
    </location>
</feature>
<organism>
    <name type="scientific">Gallus gallus</name>
    <name type="common">Chicken</name>
    <dbReference type="NCBI Taxonomy" id="9031"/>
    <lineage>
        <taxon>Eukaryota</taxon>
        <taxon>Metazoa</taxon>
        <taxon>Chordata</taxon>
        <taxon>Craniata</taxon>
        <taxon>Vertebrata</taxon>
        <taxon>Euteleostomi</taxon>
        <taxon>Archelosauria</taxon>
        <taxon>Archosauria</taxon>
        <taxon>Dinosauria</taxon>
        <taxon>Saurischia</taxon>
        <taxon>Theropoda</taxon>
        <taxon>Coelurosauria</taxon>
        <taxon>Aves</taxon>
        <taxon>Neognathae</taxon>
        <taxon>Galloanserae</taxon>
        <taxon>Galliformes</taxon>
        <taxon>Phasianidae</taxon>
        <taxon>Phasianinae</taxon>
        <taxon>Gallus</taxon>
    </lineage>
</organism>
<reference evidence="7" key="1">
    <citation type="journal article" date="2005" name="Genome Biol.">
        <title>Full-length cDNAs from chicken bursal lymphocytes to facilitate gene function analysis.</title>
        <authorList>
            <person name="Caldwell R.B."/>
            <person name="Kierzek A.M."/>
            <person name="Arakawa H."/>
            <person name="Bezzubov Y."/>
            <person name="Zaim J."/>
            <person name="Fiedler P."/>
            <person name="Kutter S."/>
            <person name="Blagodatski A."/>
            <person name="Kostovska D."/>
            <person name="Koter M."/>
            <person name="Plachy J."/>
            <person name="Carninci P."/>
            <person name="Hayashizaki Y."/>
            <person name="Buerstedde J.-M."/>
        </authorList>
    </citation>
    <scope>NUCLEOTIDE SEQUENCE [LARGE SCALE MRNA]</scope>
    <source>
        <strain evidence="7">CB</strain>
        <tissue evidence="7">Bursa of Fabricius</tissue>
    </source>
</reference>